<feature type="chain" id="PRO_0000445335" description="ATP synthase subunit L" evidence="4">
    <location>
        <begin position="1"/>
        <end position="72"/>
    </location>
</feature>
<proteinExistence type="evidence at protein level"/>
<sequence length="72" mass="7275">AAPYVIFGAKVPPHWLAIGTILTVVGGIYGPKAFSSPAAAAPAATPAAAPSSEPELDVEKAINDFLASDKKE</sequence>
<comment type="function">
    <text evidence="1 2 3">Mitochondrial membrane ATP synthase (F(1)F(0) ATP synthase or Complex V) produces ATP from ADP in the presence of a proton gradient across the membrane which is generated by electron transport complexes of the respiratory chain (PubMed:25759169). F-type ATP synthases consist of two structural domains, F(1) - containing the extramembraneous catalytic core, and F(0) - containing the membrane proton channel, linked together by a central stalk and a peripheral stalk (PubMed:27791192). During catalysis, ATP synthesis in the catalytic domain of F(1) is coupled via a rotary mechanism of the central stalk subunits to proton translocation (By similarity).</text>
</comment>
<comment type="subunit">
    <text evidence="1 2 3">F-type ATP synthases have 2 components, the catalytic core F(1) and the membrane-embedded component F(0), linked together by a central stalk and a peripheral stalk (PubMed:27791192). The central stalk, also called rotor shaft, is often seen as part of F(1) (PubMed:27791192). The peripheral stalk is seen as part of F(0). F(0) contains the membrane channel next to the rotor (PubMed:27791192). F-type ATP synthases form dimers but each monomer functions independently in ATP generation (By similarity). The dimer consists of 18 different polypeptides: ATP1 (subunit alpha, part of F(1), 3 molecules per monomer), ATP2 (subunit beta, part of F(1), 3 molecules per monomer), ATP3 (subunit gamma, part of the central stalk), ATP4 (subunit b, part of the peripheral stalk), ATP5/OSCP (subunit 5/OSCP, part of the peripheral stalk), ATP6 (subunit a, part of the peripheral stalk), ATP7 (subunit d, part of the peripheral stalk), ATP8 (subunit 8, part of the peripheral stalk), OLI1 (subunit c, part of the rotor, 10 molecules per monomer), ATP14 (subunit h, part of the peripheral stalk), ATP15 (subunit epsilon, part of the central stalk), ATP16 (subunit delta, part of the central stalk), ATP17 (subunit f, part of the peripheral stalk), ATP18 (subunit i/j, part of the peripheral stalk) (PubMed:25759169, PubMed:27791192). Dimer-specific subunits are ATP19 (subunit k, at interface between monomers), ATP20 (subunit g, at interface between monomers), TIM11 (subunit e, at interface between monomers) (By similarity). Also contains subunit L (PubMed:25759169).</text>
</comment>
<comment type="subcellular location">
    <subcellularLocation>
        <location evidence="8">Mitochondrion inner membrane</location>
    </subcellularLocation>
    <text evidence="8">The F-type ATP synthase complex is anchored in the mitochondrial inner membrane via the F(0) domain with the F(1) domain and the peripheral stalk extending into the mitochondrial matrix.</text>
</comment>
<comment type="mass spectrometry" mass="7275.0" method="MALDI" evidence="2"/>
<reference evidence="7" key="1">
    <citation type="submission" date="2016-08" db="UniProtKB">
        <authorList>
            <person name="Fearnley I.M."/>
        </authorList>
    </citation>
    <scope>PARTIAL PROTEIN SEQUENCE</scope>
    <source>
        <strain evidence="6">A16 / NCYC 2310</strain>
    </source>
</reference>
<reference evidence="7" key="2">
    <citation type="journal article" date="2015" name="Biochem. J.">
        <title>The purification and characterization of ATP synthase complexes from the mitochondria of four fungal species.</title>
        <authorList>
            <person name="Liu S."/>
            <person name="Charlesworth T.J."/>
            <person name="Bason J.V."/>
            <person name="Montgomery M.G."/>
            <person name="Harbour M.E."/>
            <person name="Fearnley I.M."/>
            <person name="Walker J.E."/>
        </authorList>
    </citation>
    <scope>PROTEIN SEQUENCE OF 1-10</scope>
    <scope>IDENTIFICATION IN ATP SYNTHASE COMPLEX</scope>
    <scope>FUNCTION OF ATPASE COMPLEX</scope>
    <scope>SUBUNIT</scope>
    <scope>SUBCELLULAR LOCATION</scope>
    <scope>MASS SPECTROMETRY</scope>
    <scope>IDENTIFICATION BY MASS SPECTROMETRY</scope>
    <source>
        <strain evidence="5">A16 / NCYC 2310</strain>
    </source>
</reference>
<reference evidence="7" key="3">
    <citation type="journal article" date="2016" name="Proc. Natl. Acad. Sci. U.S.A.">
        <title>Structure of the mitochondrial ATP synthase from Pichia angusta determined by electron cryo-microscopy.</title>
        <authorList>
            <person name="Vinothkumar K.R."/>
            <person name="Montgomery M.G."/>
            <person name="Liu S."/>
            <person name="Walker J.E."/>
        </authorList>
    </citation>
    <scope>STRUCTURE BY ELECTRON MICROSCOPY (7.0 ANGSTROMS) OF MONOMERIC ATP SYNTHASE COMPLEX IN COMPLEX WITH BOVINE ATPIF1</scope>
    <scope>FUNCTION</scope>
    <scope>SUBUNIT</scope>
    <scope>SUBCELLULAR LOCATION</scope>
</reference>
<protein>
    <recommendedName>
        <fullName evidence="5">ATP synthase subunit L</fullName>
    </recommendedName>
</protein>
<name>ATPLN_PICAN</name>
<accession>C0HK67</accession>
<dbReference type="GO" id="GO:0005743">
    <property type="term" value="C:mitochondrial inner membrane"/>
    <property type="evidence" value="ECO:0007669"/>
    <property type="project" value="UniProtKB-SubCell"/>
</dbReference>
<dbReference type="GO" id="GO:0045259">
    <property type="term" value="C:proton-transporting ATP synthase complex"/>
    <property type="evidence" value="ECO:0007669"/>
    <property type="project" value="UniProtKB-KW"/>
</dbReference>
<dbReference type="GO" id="GO:0015986">
    <property type="term" value="P:proton motive force-driven ATP synthesis"/>
    <property type="evidence" value="ECO:0007669"/>
    <property type="project" value="TreeGrafter"/>
</dbReference>
<dbReference type="GO" id="GO:1902600">
    <property type="term" value="P:proton transmembrane transport"/>
    <property type="evidence" value="ECO:0007669"/>
    <property type="project" value="UniProtKB-KW"/>
</dbReference>
<dbReference type="InterPro" id="IPR021278">
    <property type="entry name" value="ATP19"/>
</dbReference>
<dbReference type="PANTHER" id="PTHR28074">
    <property type="entry name" value="ATP SYNTHASE SUBUNIT K, MITOCHONDRIAL"/>
    <property type="match status" value="1"/>
</dbReference>
<dbReference type="PANTHER" id="PTHR28074:SF1">
    <property type="entry name" value="ATP SYNTHASE SUBUNIT K, MITOCHONDRIAL"/>
    <property type="match status" value="1"/>
</dbReference>
<dbReference type="Pfam" id="PF11022">
    <property type="entry name" value="ATP19"/>
    <property type="match status" value="1"/>
</dbReference>
<keyword id="KW-0066">ATP synthesis</keyword>
<keyword id="KW-0138">CF(0)</keyword>
<keyword id="KW-0903">Direct protein sequencing</keyword>
<keyword id="KW-0375">Hydrogen ion transport</keyword>
<keyword id="KW-0406">Ion transport</keyword>
<keyword id="KW-0472">Membrane</keyword>
<keyword id="KW-0496">Mitochondrion</keyword>
<keyword id="KW-0999">Mitochondrion inner membrane</keyword>
<keyword id="KW-0813">Transport</keyword>
<organism evidence="5">
    <name type="scientific">Pichia angusta</name>
    <name type="common">Yeast</name>
    <name type="synonym">Hansenula polymorpha</name>
    <dbReference type="NCBI Taxonomy" id="870730"/>
    <lineage>
        <taxon>Eukaryota</taxon>
        <taxon>Fungi</taxon>
        <taxon>Dikarya</taxon>
        <taxon>Ascomycota</taxon>
        <taxon>Saccharomycotina</taxon>
        <taxon>Pichiomycetes</taxon>
        <taxon>Pichiales</taxon>
        <taxon>Pichiaceae</taxon>
        <taxon>Ogataea</taxon>
    </lineage>
</organism>
<evidence type="ECO:0000250" key="1">
    <source>
        <dbReference type="UniProtKB" id="B5FVB3"/>
    </source>
</evidence>
<evidence type="ECO:0000269" key="2">
    <source>
    </source>
</evidence>
<evidence type="ECO:0000269" key="3">
    <source>
    </source>
</evidence>
<evidence type="ECO:0000269" key="4">
    <source ref="1"/>
</evidence>
<evidence type="ECO:0000303" key="5">
    <source>
    </source>
</evidence>
<evidence type="ECO:0000303" key="6">
    <source ref="1"/>
</evidence>
<evidence type="ECO:0000305" key="7"/>
<evidence type="ECO:0000305" key="8">
    <source>
    </source>
</evidence>